<reference key="1">
    <citation type="journal article" date="1997" name="Gene">
        <title>Cloning and chromosome mapping of the feline genes p21WAF1 and p27Kip1.</title>
        <authorList>
            <person name="Okuda M."/>
            <person name="Minehata K."/>
            <person name="Setoguchi A."/>
            <person name="Cho K.-W."/>
            <person name="Nakamura N."/>
            <person name="Nishigaki K."/>
            <person name="Watari T."/>
            <person name="Cevario S."/>
            <person name="O'Brien S.J."/>
            <person name="Tsujimoto H."/>
            <person name="Hasegawa A."/>
        </authorList>
    </citation>
    <scope>NUCLEOTIDE SEQUENCE [MRNA]</scope>
    <source>
        <tissue>Lymph node</tissue>
    </source>
</reference>
<keyword id="KW-0007">Acetylation</keyword>
<keyword id="KW-0131">Cell cycle</keyword>
<keyword id="KW-0963">Cytoplasm</keyword>
<keyword id="KW-0479">Metal-binding</keyword>
<keyword id="KW-0539">Nucleus</keyword>
<keyword id="KW-0597">Phosphoprotein</keyword>
<keyword id="KW-0649">Protein kinase inhibitor</keyword>
<keyword id="KW-1185">Reference proteome</keyword>
<keyword id="KW-0832">Ubl conjugation</keyword>
<keyword id="KW-0862">Zinc</keyword>
<keyword id="KW-0863">Zinc-finger</keyword>
<gene>
    <name type="primary">CDKN1A</name>
    <name type="synonym">CIP1</name>
    <name type="synonym">WAF1</name>
</gene>
<name>CDN1A_FELCA</name>
<accession>O19002</accession>
<protein>
    <recommendedName>
        <fullName>Cyclin-dependent kinase inhibitor 1</fullName>
    </recommendedName>
    <alternativeName>
        <fullName>CDK-interacting protein 1</fullName>
    </alternativeName>
    <alternativeName>
        <fullName>p21</fullName>
    </alternativeName>
</protein>
<proteinExistence type="evidence at transcript level"/>
<evidence type="ECO:0000250" key="1"/>
<evidence type="ECO:0000250" key="2">
    <source>
        <dbReference type="UniProtKB" id="P38936"/>
    </source>
</evidence>
<evidence type="ECO:0000250" key="3">
    <source>
        <dbReference type="UniProtKB" id="P39689"/>
    </source>
</evidence>
<evidence type="ECO:0000255" key="4"/>
<evidence type="ECO:0000256" key="5">
    <source>
        <dbReference type="SAM" id="MobiDB-lite"/>
    </source>
</evidence>
<evidence type="ECO:0000305" key="6"/>
<sequence>MSEPSRDAHQIPHGSKACRRLFGPVDSEQLRRDCDALMAGCVQEARERWNFDFVTETPLEGDFAWERVWGLGLPKLYLPAGPRGGRDDLGGGKRPSTSSTLLPGTAREDHLDLSLSCTLMPHSPERPEASPGAPGTSQGRKRRQTSMTDFYHSKRRLIFSKRKP</sequence>
<organism>
    <name type="scientific">Felis catus</name>
    <name type="common">Cat</name>
    <name type="synonym">Felis silvestris catus</name>
    <dbReference type="NCBI Taxonomy" id="9685"/>
    <lineage>
        <taxon>Eukaryota</taxon>
        <taxon>Metazoa</taxon>
        <taxon>Chordata</taxon>
        <taxon>Craniata</taxon>
        <taxon>Vertebrata</taxon>
        <taxon>Euteleostomi</taxon>
        <taxon>Mammalia</taxon>
        <taxon>Eutheria</taxon>
        <taxon>Laurasiatheria</taxon>
        <taxon>Carnivora</taxon>
        <taxon>Feliformia</taxon>
        <taxon>Felidae</taxon>
        <taxon>Felinae</taxon>
        <taxon>Felis</taxon>
    </lineage>
</organism>
<comment type="function">
    <text evidence="2 3">May be involved in p53/TP53 mediated inhibition of cellular proliferation in response to DNA damage (By similarity). Binds to and inhibits cyclin-dependent kinase activity, preventing phosphorylation of critical cyclin-dependent kinase substrates and blocking cell cycle progression (By similarity). Functions in the nuclear localization and assembly of cyclin D-CDK4 complex and promotes its kinase activity towards RB1 (By similarity). At higher stoichiometric ratios, inhibits the kinase activity of the cyclin D-CDK4 complex (By similarity). Inhibits DNA synthesis by DNA polymerase delta by competing with POLD3 for PCNA binding (By similarity). Plays an important role in controlling cell cycle progression and DNA damage-induced G2 arrest (By similarity). Negatively regulates the CDK4- and CDK6-driven phosphorylation of RB1 in keratinocytes, thereby resulting in the release of E2F1 and subsequent transcription of E2F1-driven G1/S phase promoting genes (By similarity).</text>
</comment>
<comment type="subunit">
    <text evidence="2 3">Interacts with HDAC1; the interaction is prevented by competitive binding of C10orf90/FATS to HDAC1 facilitating acetylation and protein stabilization of CDKN1A/p21 (By similarity). Interacts with MKRN1. Interacts with PSMA3. Interacts with PCNA. Component of the ternary complex, cyclin D-CDK4-CDKN1A. Interacts (via its N-terminal domain) with CDK4; the interaction promotes the assembly of the cyclin D-CDK4 complex, its nuclear translocation and promotes the cyclin D-dependent enzyme activity of CDK4. Binding to CDK2 leads to CDK2/cyclin E inactivation at the G1-S phase DNA damage checkpoint, thereby arresting cells at the G1-S transition during DNA repair. Interacts with PIM1. Interacts with STK11 and NUAK1 (By similarity). Interacts with DTL and TRIM39 (By similarity). Interacts with PKP3; the interaction sequesters CDKN1A to the cytoplasm thereby repressing its role as an inhibitor of CDK4- and CDK6-driven RB1 phosphorylation (By similarity).</text>
</comment>
<comment type="subcellular location">
    <subcellularLocation>
        <location evidence="2">Cytoplasm</location>
    </subcellularLocation>
    <subcellularLocation>
        <location evidence="2">Nucleus</location>
    </subcellularLocation>
</comment>
<comment type="domain">
    <text evidence="1">The C-terminal is required for nuclear localization of the cyclin D-CDK4 complex.</text>
</comment>
<comment type="domain">
    <text evidence="1">The PIP-box K+4 motif mediates both the interaction with PCNA and the recruitment of the DCX(DTL) complex: while the PIP-box interacts with PCNA, the presence of the K+4 submotif, recruits the DCX(DTL) complex, leading to its ubiquitination.</text>
</comment>
<comment type="PTM">
    <text evidence="2 3">Phosphorylation of Thr-145 by Akt or of Ser-146 by PKC impairs binding to PCNA. Phosphorylation at Ser-114 by GSK3-beta enhances ubiquitination by the DCX(DTL) complex. Phosphorylation of Thr-145 by PIM2 enhances protein stability and inhibits cell proliferation. Phosphorylation of Thr-145 by PIM1 results in the relocation of CDKN1A to the cytoplasm and enhanced CDKN1A protein stability. UV radiation-induced phosphorylation at Ser-146 by NUAK1 leads to its degradation.</text>
</comment>
<comment type="PTM">
    <text evidence="2">Ubiquitinated by MKRN1; leading to polyubiquitination and 26S proteasome-dependent degradation. Ubiquitinated by the DCX(DTL) complex, also named CRL4(CDT2) complex, leading to its degradation during S phase or following UV irradiation. Ubiquitination by the DCX(DTL) complex is essential to control replication licensing and is PCNA-dependent: interacts with PCNA via its PIP-box, while the presence of the containing the 'K+4' motif in the PIP box, recruit the DCX(DTL) complex, leading to its degradation. Ubiquitination at Ser-2 leads to degradation by the proteasome pathway. Ubiquitinated by RNF114; leading to proteasomal degradation (By similarity).</text>
</comment>
<comment type="PTM">
    <text evidence="1">Acetylation leads to protein stability. Acetylated in vitro on Lys-141, Lys-154, Lys-161 and Lys-163. Deacetylation by HDAC1 is prevented by competitive binding of C10orf90/FATS to HDAC1 (By similarity).</text>
</comment>
<comment type="similarity">
    <text evidence="6">Belongs to the CDI family.</text>
</comment>
<dbReference type="EMBL" id="D84650">
    <property type="protein sequence ID" value="BAA23168.1"/>
    <property type="molecule type" value="mRNA"/>
</dbReference>
<dbReference type="RefSeq" id="NP_001009865.1">
    <property type="nucleotide sequence ID" value="NM_001009865.1"/>
</dbReference>
<dbReference type="RefSeq" id="XP_006931683.1">
    <property type="nucleotide sequence ID" value="XM_006931621.5"/>
</dbReference>
<dbReference type="BMRB" id="O19002"/>
<dbReference type="SMR" id="O19002"/>
<dbReference type="STRING" id="9685.ENSFCAP00000020450"/>
<dbReference type="PaxDb" id="9685-ENSFCAP00000020450"/>
<dbReference type="Ensembl" id="ENSFCAT00000025177.4">
    <property type="protein sequence ID" value="ENSFCAP00000020450.1"/>
    <property type="gene ID" value="ENSFCAG00000027886.4"/>
</dbReference>
<dbReference type="GeneID" id="493943"/>
<dbReference type="KEGG" id="fca:493943"/>
<dbReference type="CTD" id="1026"/>
<dbReference type="VGNC" id="VGNC:60713">
    <property type="gene designation" value="CDKN1A"/>
</dbReference>
<dbReference type="eggNOG" id="KOG4743">
    <property type="taxonomic scope" value="Eukaryota"/>
</dbReference>
<dbReference type="GeneTree" id="ENSGT00940000159918"/>
<dbReference type="HOGENOM" id="CLU_077692_1_1_1"/>
<dbReference type="InParanoid" id="O19002"/>
<dbReference type="OMA" id="NFAWERV"/>
<dbReference type="OrthoDB" id="9940972at2759"/>
<dbReference type="TreeFam" id="TF101038"/>
<dbReference type="Proteomes" id="UP000011712">
    <property type="component" value="Chromosome B2"/>
</dbReference>
<dbReference type="Bgee" id="ENSFCAG00000027886">
    <property type="expression patterns" value="Expressed in tip of external ear and 10 other cell types or tissues"/>
</dbReference>
<dbReference type="GO" id="GO:0000307">
    <property type="term" value="C:cyclin-dependent protein kinase holoenzyme complex"/>
    <property type="evidence" value="ECO:0000318"/>
    <property type="project" value="GO_Central"/>
</dbReference>
<dbReference type="GO" id="GO:0005737">
    <property type="term" value="C:cytoplasm"/>
    <property type="evidence" value="ECO:0000250"/>
    <property type="project" value="UniProtKB"/>
</dbReference>
<dbReference type="GO" id="GO:0005829">
    <property type="term" value="C:cytosol"/>
    <property type="evidence" value="ECO:0007669"/>
    <property type="project" value="Ensembl"/>
</dbReference>
<dbReference type="GO" id="GO:0016604">
    <property type="term" value="C:nuclear body"/>
    <property type="evidence" value="ECO:0007669"/>
    <property type="project" value="Ensembl"/>
</dbReference>
<dbReference type="GO" id="GO:0005730">
    <property type="term" value="C:nucleolus"/>
    <property type="evidence" value="ECO:0007669"/>
    <property type="project" value="Ensembl"/>
</dbReference>
<dbReference type="GO" id="GO:0005634">
    <property type="term" value="C:nucleus"/>
    <property type="evidence" value="ECO:0000250"/>
    <property type="project" value="UniProtKB"/>
</dbReference>
<dbReference type="GO" id="GO:0070557">
    <property type="term" value="C:PCNA-p21 complex"/>
    <property type="evidence" value="ECO:0000250"/>
    <property type="project" value="UniProtKB"/>
</dbReference>
<dbReference type="GO" id="GO:0030332">
    <property type="term" value="F:cyclin binding"/>
    <property type="evidence" value="ECO:0007669"/>
    <property type="project" value="Ensembl"/>
</dbReference>
<dbReference type="GO" id="GO:0019912">
    <property type="term" value="F:cyclin-dependent protein kinase activating kinase activity"/>
    <property type="evidence" value="ECO:0007669"/>
    <property type="project" value="Ensembl"/>
</dbReference>
<dbReference type="GO" id="GO:0004861">
    <property type="term" value="F:cyclin-dependent protein serine/threonine kinase inhibitor activity"/>
    <property type="evidence" value="ECO:0007669"/>
    <property type="project" value="Ensembl"/>
</dbReference>
<dbReference type="GO" id="GO:0004860">
    <property type="term" value="F:protein kinase inhibitor activity"/>
    <property type="evidence" value="ECO:0000318"/>
    <property type="project" value="GO_Central"/>
</dbReference>
<dbReference type="GO" id="GO:0140311">
    <property type="term" value="F:protein sequestering activity"/>
    <property type="evidence" value="ECO:0007669"/>
    <property type="project" value="Ensembl"/>
</dbReference>
<dbReference type="GO" id="GO:0120283">
    <property type="term" value="F:protein serine/threonine kinase binding"/>
    <property type="evidence" value="ECO:0007669"/>
    <property type="project" value="Ensembl"/>
</dbReference>
<dbReference type="GO" id="GO:0044877">
    <property type="term" value="F:protein-containing complex binding"/>
    <property type="evidence" value="ECO:0007669"/>
    <property type="project" value="Ensembl"/>
</dbReference>
<dbReference type="GO" id="GO:0031625">
    <property type="term" value="F:ubiquitin protein ligase binding"/>
    <property type="evidence" value="ECO:0007669"/>
    <property type="project" value="Ensembl"/>
</dbReference>
<dbReference type="GO" id="GO:0008270">
    <property type="term" value="F:zinc ion binding"/>
    <property type="evidence" value="ECO:0007669"/>
    <property type="project" value="UniProtKB-KW"/>
</dbReference>
<dbReference type="GO" id="GO:0034198">
    <property type="term" value="P:cellular response to amino acid starvation"/>
    <property type="evidence" value="ECO:0007669"/>
    <property type="project" value="Ensembl"/>
</dbReference>
<dbReference type="GO" id="GO:0071460">
    <property type="term" value="P:cellular response to cell-matrix adhesion"/>
    <property type="evidence" value="ECO:0007669"/>
    <property type="project" value="Ensembl"/>
</dbReference>
<dbReference type="GO" id="GO:0071480">
    <property type="term" value="P:cellular response to gamma radiation"/>
    <property type="evidence" value="ECO:0007669"/>
    <property type="project" value="Ensembl"/>
</dbReference>
<dbReference type="GO" id="GO:0071493">
    <property type="term" value="P:cellular response to UV-B"/>
    <property type="evidence" value="ECO:0007669"/>
    <property type="project" value="Ensembl"/>
</dbReference>
<dbReference type="GO" id="GO:0006974">
    <property type="term" value="P:DNA damage response"/>
    <property type="evidence" value="ECO:0000318"/>
    <property type="project" value="GO_Central"/>
</dbReference>
<dbReference type="GO" id="GO:0030330">
    <property type="term" value="P:DNA damage response, signal transduction by p53 class mediator"/>
    <property type="evidence" value="ECO:0007669"/>
    <property type="project" value="Ensembl"/>
</dbReference>
<dbReference type="GO" id="GO:0048144">
    <property type="term" value="P:fibroblast proliferation"/>
    <property type="evidence" value="ECO:0007669"/>
    <property type="project" value="Ensembl"/>
</dbReference>
<dbReference type="GO" id="GO:0007507">
    <property type="term" value="P:heart development"/>
    <property type="evidence" value="ECO:0007669"/>
    <property type="project" value="Ensembl"/>
</dbReference>
<dbReference type="GO" id="GO:0001701">
    <property type="term" value="P:in utero embryonic development"/>
    <property type="evidence" value="ECO:0007669"/>
    <property type="project" value="Ensembl"/>
</dbReference>
<dbReference type="GO" id="GO:0042771">
    <property type="term" value="P:intrinsic apoptotic signaling pathway in response to DNA damage by p53 class mediator"/>
    <property type="evidence" value="ECO:0007669"/>
    <property type="project" value="Ensembl"/>
</dbReference>
<dbReference type="GO" id="GO:0030216">
    <property type="term" value="P:keratinocyte differentiation"/>
    <property type="evidence" value="ECO:0007669"/>
    <property type="project" value="Ensembl"/>
</dbReference>
<dbReference type="GO" id="GO:0043616">
    <property type="term" value="P:keratinocyte proliferation"/>
    <property type="evidence" value="ECO:0007669"/>
    <property type="project" value="Ensembl"/>
</dbReference>
<dbReference type="GO" id="GO:0031571">
    <property type="term" value="P:mitotic G1 DNA damage checkpoint signaling"/>
    <property type="evidence" value="ECO:0007669"/>
    <property type="project" value="Ensembl"/>
</dbReference>
<dbReference type="GO" id="GO:0007095">
    <property type="term" value="P:mitotic G2 DNA damage checkpoint signaling"/>
    <property type="evidence" value="ECO:0000250"/>
    <property type="project" value="UniProtKB"/>
</dbReference>
<dbReference type="GO" id="GO:1905179">
    <property type="term" value="P:negative regulation of cardiac muscle tissue regeneration"/>
    <property type="evidence" value="ECO:0007669"/>
    <property type="project" value="Ensembl"/>
</dbReference>
<dbReference type="GO" id="GO:0030308">
    <property type="term" value="P:negative regulation of cell growth"/>
    <property type="evidence" value="ECO:0007669"/>
    <property type="project" value="Ensembl"/>
</dbReference>
<dbReference type="GO" id="GO:2000279">
    <property type="term" value="P:negative regulation of DNA biosynthetic process"/>
    <property type="evidence" value="ECO:0007669"/>
    <property type="project" value="Ensembl"/>
</dbReference>
<dbReference type="GO" id="GO:0010629">
    <property type="term" value="P:negative regulation of gene expression"/>
    <property type="evidence" value="ECO:0007669"/>
    <property type="project" value="Ensembl"/>
</dbReference>
<dbReference type="GO" id="GO:1904706">
    <property type="term" value="P:negative regulation of vascular associated smooth muscle cell proliferation"/>
    <property type="evidence" value="ECO:0007669"/>
    <property type="project" value="Ensembl"/>
</dbReference>
<dbReference type="GO" id="GO:0090402">
    <property type="term" value="P:oncogene-induced cell senescence"/>
    <property type="evidence" value="ECO:0007669"/>
    <property type="project" value="Ensembl"/>
</dbReference>
<dbReference type="GO" id="GO:0030890">
    <property type="term" value="P:positive regulation of B cell proliferation"/>
    <property type="evidence" value="ECO:0007669"/>
    <property type="project" value="Ensembl"/>
</dbReference>
<dbReference type="GO" id="GO:0048146">
    <property type="term" value="P:positive regulation of fibroblast proliferation"/>
    <property type="evidence" value="ECO:0007669"/>
    <property type="project" value="Ensembl"/>
</dbReference>
<dbReference type="GO" id="GO:0043068">
    <property type="term" value="P:positive regulation of programmed cell death"/>
    <property type="evidence" value="ECO:0007669"/>
    <property type="project" value="Ensembl"/>
</dbReference>
<dbReference type="GO" id="GO:2000379">
    <property type="term" value="P:positive regulation of reactive oxygen species metabolic process"/>
    <property type="evidence" value="ECO:0007669"/>
    <property type="project" value="Ensembl"/>
</dbReference>
<dbReference type="GO" id="GO:0006606">
    <property type="term" value="P:protein import into nucleus"/>
    <property type="evidence" value="ECO:0007669"/>
    <property type="project" value="Ensembl"/>
</dbReference>
<dbReference type="GO" id="GO:0007265">
    <property type="term" value="P:Ras protein signal transduction"/>
    <property type="evidence" value="ECO:0007669"/>
    <property type="project" value="Ensembl"/>
</dbReference>
<dbReference type="GO" id="GO:1902806">
    <property type="term" value="P:regulation of cell cycle G1/S phase transition"/>
    <property type="evidence" value="ECO:0000250"/>
    <property type="project" value="UniProtKB"/>
</dbReference>
<dbReference type="GO" id="GO:2000045">
    <property type="term" value="P:regulation of G1/S transition of mitotic cell cycle"/>
    <property type="evidence" value="ECO:0000318"/>
    <property type="project" value="GO_Central"/>
</dbReference>
<dbReference type="GO" id="GO:0090399">
    <property type="term" value="P:replicative senescence"/>
    <property type="evidence" value="ECO:0007669"/>
    <property type="project" value="Ensembl"/>
</dbReference>
<dbReference type="GO" id="GO:0042246">
    <property type="term" value="P:tissue regeneration"/>
    <property type="evidence" value="ECO:0007669"/>
    <property type="project" value="Ensembl"/>
</dbReference>
<dbReference type="GO" id="GO:0042060">
    <property type="term" value="P:wound healing"/>
    <property type="evidence" value="ECO:0007669"/>
    <property type="project" value="Ensembl"/>
</dbReference>
<dbReference type="FunFam" id="4.10.365.10:FF:000003">
    <property type="entry name" value="cyclin-dependent kinase inhibitor 1 isoform X1"/>
    <property type="match status" value="1"/>
</dbReference>
<dbReference type="Gene3D" id="4.10.365.10">
    <property type="entry name" value="p27"/>
    <property type="match status" value="1"/>
</dbReference>
<dbReference type="InterPro" id="IPR003175">
    <property type="entry name" value="CDI_dom"/>
</dbReference>
<dbReference type="InterPro" id="IPR044898">
    <property type="entry name" value="CDI_dom_sf"/>
</dbReference>
<dbReference type="InterPro" id="IPR029841">
    <property type="entry name" value="CDKN1A"/>
</dbReference>
<dbReference type="PANTHER" id="PTHR46778:SF1">
    <property type="entry name" value="CYCLIN-DEPENDENT KINASE INHIBITOR 1"/>
    <property type="match status" value="1"/>
</dbReference>
<dbReference type="PANTHER" id="PTHR46778">
    <property type="entry name" value="CYCLIN-DEPENDENT KINASE INHIBITOR 1-RELATED"/>
    <property type="match status" value="1"/>
</dbReference>
<dbReference type="Pfam" id="PF02234">
    <property type="entry name" value="CDI"/>
    <property type="match status" value="1"/>
</dbReference>
<feature type="initiator methionine" description="Removed" evidence="2">
    <location>
        <position position="1"/>
    </location>
</feature>
<feature type="chain" id="PRO_0000190078" description="Cyclin-dependent kinase inhibitor 1">
    <location>
        <begin position="2"/>
        <end position="164"/>
    </location>
</feature>
<feature type="zinc finger region" description="C4-type" evidence="4">
    <location>
        <begin position="13"/>
        <end position="41"/>
    </location>
</feature>
<feature type="region of interest" description="Required for binding cyclins" evidence="1">
    <location>
        <begin position="17"/>
        <end position="24"/>
    </location>
</feature>
<feature type="region of interest" description="Required for binding CDKs" evidence="1">
    <location>
        <begin position="53"/>
        <end position="58"/>
    </location>
</feature>
<feature type="region of interest" description="Disordered" evidence="5">
    <location>
        <begin position="80"/>
        <end position="164"/>
    </location>
</feature>
<feature type="region of interest" description="Interaction with TRIM39" evidence="2">
    <location>
        <begin position="152"/>
        <end position="164"/>
    </location>
</feature>
<feature type="short sequence motif" description="PIP-box K+4 motif">
    <location>
        <begin position="140"/>
        <end position="164"/>
    </location>
</feature>
<feature type="short sequence motif" description="Nuclear localization signal" evidence="4">
    <location>
        <begin position="141"/>
        <end position="156"/>
    </location>
</feature>
<feature type="compositionally biased region" description="Basic residues" evidence="5">
    <location>
        <begin position="153"/>
        <end position="164"/>
    </location>
</feature>
<feature type="modified residue" description="N-acetylserine" evidence="2">
    <location>
        <position position="2"/>
    </location>
</feature>
<feature type="modified residue" description="Phosphoserine; by GSK3-beta" evidence="2">
    <location>
        <position position="114"/>
    </location>
</feature>
<feature type="modified residue" description="Phosphoserine" evidence="2">
    <location>
        <position position="130"/>
    </location>
</feature>
<feature type="modified residue" description="Phosphothreonine; by PKA, PKB/AKT1, PIM1 and PIM2" evidence="2">
    <location>
        <position position="145"/>
    </location>
</feature>
<feature type="modified residue" description="Phosphoserine; by PKC and NUAK1" evidence="2">
    <location>
        <position position="146"/>
    </location>
</feature>
<feature type="modified residue" description="Phosphoserine" evidence="2">
    <location>
        <position position="160"/>
    </location>
</feature>
<feature type="cross-link" description="Glycyl serine ester (Ser-Gly) (interchain with G-Cter in ubiquitin)" evidence="1">
    <location>
        <position position="2"/>
    </location>
</feature>